<organism>
    <name type="scientific">Acinetobacter baumannii (strain AB0057)</name>
    <dbReference type="NCBI Taxonomy" id="480119"/>
    <lineage>
        <taxon>Bacteria</taxon>
        <taxon>Pseudomonadati</taxon>
        <taxon>Pseudomonadota</taxon>
        <taxon>Gammaproteobacteria</taxon>
        <taxon>Moraxellales</taxon>
        <taxon>Moraxellaceae</taxon>
        <taxon>Acinetobacter</taxon>
        <taxon>Acinetobacter calcoaceticus/baumannii complex</taxon>
    </lineage>
</organism>
<comment type="similarity">
    <text evidence="1">Belongs to the universal ribosomal protein uL29 family.</text>
</comment>
<keyword id="KW-0002">3D-structure</keyword>
<keyword id="KW-0687">Ribonucleoprotein</keyword>
<keyword id="KW-0689">Ribosomal protein</keyword>
<proteinExistence type="evidence at protein level"/>
<dbReference type="EMBL" id="CP001182">
    <property type="protein sequence ID" value="ACJ42889.1"/>
    <property type="molecule type" value="Genomic_DNA"/>
</dbReference>
<dbReference type="RefSeq" id="WP_000849928.1">
    <property type="nucleotide sequence ID" value="NC_011586.2"/>
</dbReference>
<dbReference type="PDB" id="6V39">
    <property type="method" value="EM"/>
    <property type="resolution" value="3.04 A"/>
    <property type="chains" value="X=1-65"/>
</dbReference>
<dbReference type="PDB" id="6V3A">
    <property type="method" value="EM"/>
    <property type="resolution" value="2.82 A"/>
    <property type="chains" value="X=1-65"/>
</dbReference>
<dbReference type="PDB" id="6V3B">
    <property type="method" value="EM"/>
    <property type="resolution" value="2.91 A"/>
    <property type="chains" value="X=1-65"/>
</dbReference>
<dbReference type="PDB" id="6V3D">
    <property type="method" value="EM"/>
    <property type="resolution" value="2.95 A"/>
    <property type="chains" value="X=1-65"/>
</dbReference>
<dbReference type="PDB" id="7M4V">
    <property type="method" value="EM"/>
    <property type="resolution" value="2.54 A"/>
    <property type="chains" value="X=1-65"/>
</dbReference>
<dbReference type="PDB" id="7M4W">
    <property type="method" value="EM"/>
    <property type="resolution" value="2.55 A"/>
    <property type="chains" value="X=1-65"/>
</dbReference>
<dbReference type="PDB" id="7M4X">
    <property type="method" value="EM"/>
    <property type="resolution" value="2.66 A"/>
    <property type="chains" value="X=1-65"/>
</dbReference>
<dbReference type="PDB" id="7M4Y">
    <property type="method" value="EM"/>
    <property type="resolution" value="2.50 A"/>
    <property type="chains" value="X=1-65"/>
</dbReference>
<dbReference type="PDB" id="7M4Z">
    <property type="method" value="EM"/>
    <property type="resolution" value="2.92 A"/>
    <property type="chains" value="X=1-65"/>
</dbReference>
<dbReference type="PDB" id="7RYF">
    <property type="method" value="EM"/>
    <property type="resolution" value="2.65 A"/>
    <property type="chains" value="X=1-65"/>
</dbReference>
<dbReference type="PDB" id="7RYG">
    <property type="method" value="EM"/>
    <property type="resolution" value="2.38 A"/>
    <property type="chains" value="X=1-65"/>
</dbReference>
<dbReference type="PDB" id="7RYH">
    <property type="method" value="EM"/>
    <property type="resolution" value="2.43 A"/>
    <property type="chains" value="X=1-65"/>
</dbReference>
<dbReference type="PDB" id="7UVV">
    <property type="method" value="EM"/>
    <property type="resolution" value="2.50 A"/>
    <property type="chains" value="X=1-65"/>
</dbReference>
<dbReference type="PDB" id="7UVW">
    <property type="method" value="EM"/>
    <property type="resolution" value="2.37 A"/>
    <property type="chains" value="X=1-65"/>
</dbReference>
<dbReference type="PDB" id="7UVX">
    <property type="method" value="EM"/>
    <property type="resolution" value="2.35 A"/>
    <property type="chains" value="X=1-65"/>
</dbReference>
<dbReference type="PDB" id="7UVY">
    <property type="method" value="EM"/>
    <property type="resolution" value="2.39 A"/>
    <property type="chains" value="X=1-65"/>
</dbReference>
<dbReference type="PDB" id="7UVZ">
    <property type="method" value="EM"/>
    <property type="resolution" value="2.21 A"/>
    <property type="chains" value="X=1-65"/>
</dbReference>
<dbReference type="PDB" id="7UW1">
    <property type="method" value="EM"/>
    <property type="resolution" value="2.21 A"/>
    <property type="chains" value="X=1-65"/>
</dbReference>
<dbReference type="PDBsum" id="6V39"/>
<dbReference type="PDBsum" id="6V3A"/>
<dbReference type="PDBsum" id="6V3B"/>
<dbReference type="PDBsum" id="6V3D"/>
<dbReference type="PDBsum" id="7M4V"/>
<dbReference type="PDBsum" id="7M4W"/>
<dbReference type="PDBsum" id="7M4X"/>
<dbReference type="PDBsum" id="7M4Y"/>
<dbReference type="PDBsum" id="7M4Z"/>
<dbReference type="PDBsum" id="7RYF"/>
<dbReference type="PDBsum" id="7RYG"/>
<dbReference type="PDBsum" id="7RYH"/>
<dbReference type="PDBsum" id="7UVV"/>
<dbReference type="PDBsum" id="7UVW"/>
<dbReference type="PDBsum" id="7UVX"/>
<dbReference type="PDBsum" id="7UVY"/>
<dbReference type="PDBsum" id="7UVZ"/>
<dbReference type="PDBsum" id="7UW1"/>
<dbReference type="EMDB" id="EMD-21030"/>
<dbReference type="EMDB" id="EMD-21031"/>
<dbReference type="EMDB" id="EMD-21032"/>
<dbReference type="EMDB" id="EMD-21033"/>
<dbReference type="EMDB" id="EMD-23667"/>
<dbReference type="EMDB" id="EMD-23668"/>
<dbReference type="EMDB" id="EMD-23669"/>
<dbReference type="EMDB" id="EMD-23670"/>
<dbReference type="EMDB" id="EMD-23671"/>
<dbReference type="EMDB" id="EMD-24738"/>
<dbReference type="EMDB" id="EMD-24739"/>
<dbReference type="EMDB" id="EMD-24740"/>
<dbReference type="EMDB" id="EMD-26817"/>
<dbReference type="EMDB" id="EMD-26818"/>
<dbReference type="EMDB" id="EMD-26819"/>
<dbReference type="EMDB" id="EMD-26820"/>
<dbReference type="EMDB" id="EMD-26821"/>
<dbReference type="EMDB" id="EMD-26822"/>
<dbReference type="SMR" id="B7IA31"/>
<dbReference type="IntAct" id="B7IA31">
    <property type="interactions" value="2"/>
</dbReference>
<dbReference type="GeneID" id="9380824"/>
<dbReference type="KEGG" id="abn:AB57_3522"/>
<dbReference type="HOGENOM" id="CLU_158491_1_2_6"/>
<dbReference type="Proteomes" id="UP000007094">
    <property type="component" value="Chromosome"/>
</dbReference>
<dbReference type="GO" id="GO:0022625">
    <property type="term" value="C:cytosolic large ribosomal subunit"/>
    <property type="evidence" value="ECO:0007669"/>
    <property type="project" value="TreeGrafter"/>
</dbReference>
<dbReference type="GO" id="GO:0003735">
    <property type="term" value="F:structural constituent of ribosome"/>
    <property type="evidence" value="ECO:0007669"/>
    <property type="project" value="InterPro"/>
</dbReference>
<dbReference type="GO" id="GO:0006412">
    <property type="term" value="P:translation"/>
    <property type="evidence" value="ECO:0007669"/>
    <property type="project" value="UniProtKB-UniRule"/>
</dbReference>
<dbReference type="CDD" id="cd00427">
    <property type="entry name" value="Ribosomal_L29_HIP"/>
    <property type="match status" value="1"/>
</dbReference>
<dbReference type="FunFam" id="1.10.287.310:FF:000001">
    <property type="entry name" value="50S ribosomal protein L29"/>
    <property type="match status" value="1"/>
</dbReference>
<dbReference type="Gene3D" id="1.10.287.310">
    <property type="match status" value="1"/>
</dbReference>
<dbReference type="HAMAP" id="MF_00374">
    <property type="entry name" value="Ribosomal_uL29"/>
    <property type="match status" value="1"/>
</dbReference>
<dbReference type="InterPro" id="IPR050063">
    <property type="entry name" value="Ribosomal_protein_uL29"/>
</dbReference>
<dbReference type="InterPro" id="IPR001854">
    <property type="entry name" value="Ribosomal_uL29"/>
</dbReference>
<dbReference type="InterPro" id="IPR036049">
    <property type="entry name" value="Ribosomal_uL29_sf"/>
</dbReference>
<dbReference type="NCBIfam" id="TIGR00012">
    <property type="entry name" value="L29"/>
    <property type="match status" value="1"/>
</dbReference>
<dbReference type="PANTHER" id="PTHR10916">
    <property type="entry name" value="60S RIBOSOMAL PROTEIN L35/50S RIBOSOMAL PROTEIN L29"/>
    <property type="match status" value="1"/>
</dbReference>
<dbReference type="PANTHER" id="PTHR10916:SF0">
    <property type="entry name" value="LARGE RIBOSOMAL SUBUNIT PROTEIN UL29C"/>
    <property type="match status" value="1"/>
</dbReference>
<dbReference type="Pfam" id="PF00831">
    <property type="entry name" value="Ribosomal_L29"/>
    <property type="match status" value="1"/>
</dbReference>
<dbReference type="SUPFAM" id="SSF46561">
    <property type="entry name" value="Ribosomal protein L29 (L29p)"/>
    <property type="match status" value="1"/>
</dbReference>
<accession>B7IA31</accession>
<sequence length="65" mass="7435">MKTKDLREKSVEELKALLDEQQLNQFRLRMAKATGQLGKSHEVQVARKTIARIKTLLTEKQGNGQ</sequence>
<reference key="1">
    <citation type="journal article" date="2008" name="J. Bacteriol.">
        <title>Comparative genome sequence analysis of multidrug-resistant Acinetobacter baumannii.</title>
        <authorList>
            <person name="Adams M.D."/>
            <person name="Goglin K."/>
            <person name="Molyneaux N."/>
            <person name="Hujer K.M."/>
            <person name="Lavender H."/>
            <person name="Jamison J.J."/>
            <person name="MacDonald I.J."/>
            <person name="Martin K.M."/>
            <person name="Russo T."/>
            <person name="Campagnari A.A."/>
            <person name="Hujer A.M."/>
            <person name="Bonomo R.A."/>
            <person name="Gill S.R."/>
        </authorList>
    </citation>
    <scope>NUCLEOTIDE SEQUENCE [LARGE SCALE GENOMIC DNA]</scope>
    <source>
        <strain>AB0057</strain>
    </source>
</reference>
<gene>
    <name evidence="1" type="primary">rpmC</name>
    <name type="ordered locus">AB57_3522</name>
</gene>
<protein>
    <recommendedName>
        <fullName evidence="1">Large ribosomal subunit protein uL29</fullName>
    </recommendedName>
    <alternativeName>
        <fullName evidence="2">50S ribosomal protein L29</fullName>
    </alternativeName>
</protein>
<feature type="chain" id="PRO_1000121717" description="Large ribosomal subunit protein uL29">
    <location>
        <begin position="1"/>
        <end position="65"/>
    </location>
</feature>
<feature type="helix" evidence="3">
    <location>
        <begin position="3"/>
        <end position="8"/>
    </location>
</feature>
<feature type="helix" evidence="3">
    <location>
        <begin position="11"/>
        <end position="34"/>
    </location>
</feature>
<feature type="helix" evidence="3">
    <location>
        <begin position="41"/>
        <end position="60"/>
    </location>
</feature>
<evidence type="ECO:0000255" key="1">
    <source>
        <dbReference type="HAMAP-Rule" id="MF_00374"/>
    </source>
</evidence>
<evidence type="ECO:0000305" key="2"/>
<evidence type="ECO:0007829" key="3">
    <source>
        <dbReference type="PDB" id="7M4V"/>
    </source>
</evidence>
<name>RL29_ACIB5</name>